<protein>
    <recommendedName>
        <fullName evidence="1">UPF0259 membrane protein YciC</fullName>
    </recommendedName>
</protein>
<organism>
    <name type="scientific">Salmonella arizonae (strain ATCC BAA-731 / CDC346-86 / RSK2980)</name>
    <dbReference type="NCBI Taxonomy" id="41514"/>
    <lineage>
        <taxon>Bacteria</taxon>
        <taxon>Pseudomonadati</taxon>
        <taxon>Pseudomonadota</taxon>
        <taxon>Gammaproteobacteria</taxon>
        <taxon>Enterobacterales</taxon>
        <taxon>Enterobacteriaceae</taxon>
        <taxon>Salmonella</taxon>
    </lineage>
</organism>
<feature type="chain" id="PRO_1000084490" description="UPF0259 membrane protein YciC">
    <location>
        <begin position="1"/>
        <end position="247"/>
    </location>
</feature>
<feature type="transmembrane region" description="Helical" evidence="1">
    <location>
        <begin position="20"/>
        <end position="40"/>
    </location>
</feature>
<feature type="transmembrane region" description="Helical" evidence="1">
    <location>
        <begin position="87"/>
        <end position="107"/>
    </location>
</feature>
<feature type="transmembrane region" description="Helical" evidence="1">
    <location>
        <begin position="118"/>
        <end position="140"/>
    </location>
</feature>
<feature type="transmembrane region" description="Helical" evidence="1">
    <location>
        <begin position="152"/>
        <end position="172"/>
    </location>
</feature>
<feature type="transmembrane region" description="Helical" evidence="1">
    <location>
        <begin position="194"/>
        <end position="214"/>
    </location>
</feature>
<feature type="transmembrane region" description="Helical" evidence="1">
    <location>
        <begin position="219"/>
        <end position="239"/>
    </location>
</feature>
<evidence type="ECO:0000255" key="1">
    <source>
        <dbReference type="HAMAP-Rule" id="MF_01067"/>
    </source>
</evidence>
<gene>
    <name evidence="1" type="primary">yciC</name>
    <name type="ordered locus">SARI_01220</name>
</gene>
<accession>A9MPE1</accession>
<name>YCIC_SALAR</name>
<keyword id="KW-0997">Cell inner membrane</keyword>
<keyword id="KW-1003">Cell membrane</keyword>
<keyword id="KW-0472">Membrane</keyword>
<keyword id="KW-1185">Reference proteome</keyword>
<keyword id="KW-0812">Transmembrane</keyword>
<keyword id="KW-1133">Transmembrane helix</keyword>
<sequence>MSITAKSVYRDAGNFFRNQFITILLVSLLCAFITVILGHAFSPSDAQIAQLSEGEHLAGSAGLFELVQNMSPEQQQILLRASAASTFSGLIGNAILAGGIILMIQLVSAGHRVSALRAIGASAPALPKLFILIFLTTLLVQIGIMLIVVPGIIMSIVLALAPVMLVEEKMGVFTAMRSSMRLAWANMRLVAPAVIGWLLAKTLLLLFAPSLAVLTPNVGAVLANTLSNLISAVLLIYLFRLYMLIRQ</sequence>
<proteinExistence type="inferred from homology"/>
<reference key="1">
    <citation type="submission" date="2007-11" db="EMBL/GenBank/DDBJ databases">
        <authorList>
            <consortium name="The Salmonella enterica serovar Arizonae Genome Sequencing Project"/>
            <person name="McClelland M."/>
            <person name="Sanderson E.K."/>
            <person name="Porwollik S."/>
            <person name="Spieth J."/>
            <person name="Clifton W.S."/>
            <person name="Fulton R."/>
            <person name="Chunyan W."/>
            <person name="Wollam A."/>
            <person name="Shah N."/>
            <person name="Pepin K."/>
            <person name="Bhonagiri V."/>
            <person name="Nash W."/>
            <person name="Johnson M."/>
            <person name="Thiruvilangam P."/>
            <person name="Wilson R."/>
        </authorList>
    </citation>
    <scope>NUCLEOTIDE SEQUENCE [LARGE SCALE GENOMIC DNA]</scope>
    <source>
        <strain>ATCC BAA-731 / CDC346-86 / RSK2980</strain>
    </source>
</reference>
<comment type="subcellular location">
    <subcellularLocation>
        <location evidence="1">Cell inner membrane</location>
        <topology evidence="1">Multi-pass membrane protein</topology>
    </subcellularLocation>
</comment>
<comment type="similarity">
    <text evidence="1">Belongs to the UPF0259 family.</text>
</comment>
<dbReference type="EMBL" id="CP000880">
    <property type="protein sequence ID" value="ABX21122.1"/>
    <property type="molecule type" value="Genomic_DNA"/>
</dbReference>
<dbReference type="STRING" id="41514.SARI_01220"/>
<dbReference type="KEGG" id="ses:SARI_01220"/>
<dbReference type="HOGENOM" id="CLU_073287_0_0_6"/>
<dbReference type="Proteomes" id="UP000002084">
    <property type="component" value="Chromosome"/>
</dbReference>
<dbReference type="GO" id="GO:0005886">
    <property type="term" value="C:plasma membrane"/>
    <property type="evidence" value="ECO:0007669"/>
    <property type="project" value="UniProtKB-SubCell"/>
</dbReference>
<dbReference type="HAMAP" id="MF_01067">
    <property type="entry name" value="UPF0259"/>
    <property type="match status" value="1"/>
</dbReference>
<dbReference type="InterPro" id="IPR009627">
    <property type="entry name" value="UPF0259"/>
</dbReference>
<dbReference type="NCBIfam" id="NF002774">
    <property type="entry name" value="PRK02868.1"/>
    <property type="match status" value="1"/>
</dbReference>
<dbReference type="Pfam" id="PF06790">
    <property type="entry name" value="UPF0259"/>
    <property type="match status" value="1"/>
</dbReference>